<organism>
    <name type="scientific">Human bocavirus 4</name>
    <name type="common">HBoV4</name>
    <name type="synonym">Human bocavirus type 4</name>
    <dbReference type="NCBI Taxonomy" id="1511883"/>
    <lineage>
        <taxon>Viruses</taxon>
        <taxon>Monodnaviria</taxon>
        <taxon>Shotokuvirae</taxon>
        <taxon>Cossaviricota</taxon>
        <taxon>Quintoviricetes</taxon>
        <taxon>Piccovirales</taxon>
        <taxon>Parvoviridae</taxon>
        <taxon>Parvovirinae</taxon>
        <taxon>Bocaparvovirus</taxon>
        <taxon>Bocaparvovirus primate2</taxon>
    </lineage>
</organism>
<sequence>MAFSAPVLRAFSQPTFTYVIKFPYNNWKEDEHLLWSLLAPGTESLMIQLKNCAPHPEDDPIREDILCSLADLHYGAVFAKACYIATSTLMGQKQRTLFPRCDIVCQSEIGSDFLHCHILVGGAGLSKRNAKISRATLLGLVMAELTQRCKLLLAHRPFEPAEATIYHELKRIEREAWSGHTGNWVQILQYKDKRGDLHAQPIDPLRFLKHYILPKNRLISPSSKPDVCTSPDNWFILADKTYSHTIINGLPLLERNRKAYLQELESEVIPGPSAMAFGGRGAWEQLPEVGEQRLITSNTSTAYKANKKEKLMLNLLDKCDELNLLVYEDLVSACPDLLLMLEGQPGGARLIEQVLGMHHIKVCAKHTALSFLFHLHPDQLLTSSNKALKLLLIQGYNPLQVGHAICCVLNKQMGKQNTICFYGPASTGKTNFAKAIVQGVRLYGCVNHLNKGFVFNDCRQRLIIWWEECLMHQDWVEPAKCILGGTECRIDVKHKDSVLLQQTPVIISTNHDIYSVVGGNTVSHVHAAPLKERVLQLNFMKQLPQTFGEISPSEIAELLQWCFNEYDCTLAGFKQKWNLDKVPNSFPIGDLCPTHSQDFTLHENGFCSDCGGYLPHSADDSVYTDVASETTSGDYDPGNLGDTDGEDSKSEASEVDYCPPKKRRVISATPPNSPVSGPSLSTFLDTWQSQPRDDDELRIYEEQASQFQKNTKSTSEREEAQLGESQEPQPEPDPTAWGEKLGVCSSQQPGQPPIVLYCFEDLRPSDEDEGENIGGD</sequence>
<evidence type="ECO:0000250" key="1">
    <source>
        <dbReference type="UniProtKB" id="D0EZM8"/>
    </source>
</evidence>
<evidence type="ECO:0000250" key="2">
    <source>
        <dbReference type="UniProtKB" id="P03134"/>
    </source>
</evidence>
<evidence type="ECO:0000250" key="3">
    <source>
        <dbReference type="UniProtKB" id="Q9PZT1"/>
    </source>
</evidence>
<evidence type="ECO:0000255" key="4">
    <source>
        <dbReference type="PROSITE-ProRule" id="PRU00551"/>
    </source>
</evidence>
<evidence type="ECO:0000255" key="5">
    <source>
        <dbReference type="PROSITE-ProRule" id="PRU01366"/>
    </source>
</evidence>
<evidence type="ECO:0000256" key="6">
    <source>
        <dbReference type="SAM" id="MobiDB-lite"/>
    </source>
</evidence>
<evidence type="ECO:0000305" key="7"/>
<feature type="chain" id="PRO_0000445636" description="Initiator protein NS1">
    <location>
        <begin position="1"/>
        <end position="776"/>
    </location>
</feature>
<feature type="domain" description="PV NS1-Nuc" evidence="5">
    <location>
        <begin position="11"/>
        <end position="271"/>
    </location>
</feature>
<feature type="domain" description="SF3 helicase" evidence="4">
    <location>
        <begin position="397"/>
        <end position="552"/>
    </location>
</feature>
<feature type="region of interest" description="Ori-binding" evidence="2">
    <location>
        <begin position="193"/>
        <end position="197"/>
    </location>
</feature>
<feature type="region of interest" description="Transactivation" evidence="2">
    <location>
        <begin position="606"/>
        <end position="776"/>
    </location>
</feature>
<feature type="region of interest" description="Disordered" evidence="6">
    <location>
        <begin position="627"/>
        <end position="690"/>
    </location>
</feature>
<feature type="region of interest" description="Disordered" evidence="6">
    <location>
        <begin position="705"/>
        <end position="749"/>
    </location>
</feature>
<feature type="short sequence motif" description="RCR-2" evidence="5">
    <location>
        <begin position="115"/>
        <end position="117"/>
    </location>
</feature>
<feature type="short sequence motif" description="RCR-3" evidence="5">
    <location>
        <begin position="211"/>
        <end position="215"/>
    </location>
</feature>
<feature type="compositionally biased region" description="Polar residues" evidence="6">
    <location>
        <begin position="674"/>
        <end position="690"/>
    </location>
</feature>
<feature type="active site" description="For nuclease activity" evidence="5">
    <location>
        <position position="211"/>
    </location>
</feature>
<feature type="binding site" evidence="5">
    <location>
        <position position="108"/>
    </location>
    <ligand>
        <name>a divalent metal cation</name>
        <dbReference type="ChEBI" id="CHEBI:60240"/>
    </ligand>
</feature>
<feature type="binding site" evidence="5">
    <location>
        <position position="115"/>
    </location>
    <ligand>
        <name>a divalent metal cation</name>
        <dbReference type="ChEBI" id="CHEBI:60240"/>
    </ligand>
</feature>
<feature type="binding site" evidence="5">
    <location>
        <position position="117"/>
    </location>
    <ligand>
        <name>a divalent metal cation</name>
        <dbReference type="ChEBI" id="CHEBI:60240"/>
    </ligand>
</feature>
<feature type="binding site" evidence="4">
    <location>
        <begin position="423"/>
        <end position="430"/>
    </location>
    <ligand>
        <name>ATP</name>
        <dbReference type="ChEBI" id="CHEBI:30616"/>
    </ligand>
</feature>
<feature type="splice variant" id="VSP_059932" description="In isoform NS1-70.">
    <original>NL</original>
    <variation>RL</variation>
    <location>
        <begin position="639"/>
        <end position="640"/>
    </location>
</feature>
<feature type="splice variant" id="VSP_059933" description="In isoform NS1-70.">
    <location>
        <begin position="641"/>
        <end position="776"/>
    </location>
</feature>
<accession>C5IY43</accession>
<accession>C5IY44</accession>
<organismHost>
    <name type="scientific">Homo sapiens</name>
    <name type="common">Human</name>
    <dbReference type="NCBI Taxonomy" id="9606"/>
</organismHost>
<keyword id="KW-0025">Alternative splicing</keyword>
<keyword id="KW-0067">ATP-binding</keyword>
<keyword id="KW-0190">Covalent protein-DNA linkage</keyword>
<keyword id="KW-0235">DNA replication</keyword>
<keyword id="KW-0238">DNA-binding</keyword>
<keyword id="KW-0255">Endonuclease</keyword>
<keyword id="KW-0347">Helicase</keyword>
<keyword id="KW-1048">Host nucleus</keyword>
<keyword id="KW-0378">Hydrolase</keyword>
<keyword id="KW-0460">Magnesium</keyword>
<keyword id="KW-0479">Metal-binding</keyword>
<keyword id="KW-0511">Multifunctional enzyme</keyword>
<keyword id="KW-0540">Nuclease</keyword>
<keyword id="KW-0547">Nucleotide-binding</keyword>
<keyword id="KW-0804">Transcription</keyword>
<keyword id="KW-0805">Transcription regulation</keyword>
<keyword id="KW-1194">Viral DNA replication</keyword>
<protein>
    <recommendedName>
        <fullName evidence="2">Initiator protein NS1</fullName>
        <shortName>NS1</shortName>
        <ecNumber evidence="3">3.1.21.-</ecNumber>
        <ecNumber evidence="3">3.6.4.12</ecNumber>
    </recommendedName>
    <alternativeName>
        <fullName>Non-structural protein 1</fullName>
    </alternativeName>
    <alternativeName>
        <fullName>Non-structural protein NS1</fullName>
    </alternativeName>
</protein>
<comment type="function">
    <text evidence="2">Multifunctional protein which displays endonuclease and helicase activities required for initiating and directing viral DNA replication. Also plays a role in viral packaging and transactivation of several promoters. Binds site-specifically to 2-3 approximate tandem copies within the origins of replication (Ori), unwinds this hairpin region and nicks one DNA strand thereby initiating the rolling circle replication (RCR). Becomes covalently attached to the 5' end of the nick and provides a 3'OH for priming DNA synthesis. The helicase activity unwinds DNA in a 3'-5' direction on the longer strand. Participates in the transcriptional regulation of several promoters.</text>
</comment>
<comment type="catalytic activity">
    <reaction evidence="2">
        <text>ATP + H2O = ADP + phosphate + H(+)</text>
        <dbReference type="Rhea" id="RHEA:13065"/>
        <dbReference type="ChEBI" id="CHEBI:15377"/>
        <dbReference type="ChEBI" id="CHEBI:15378"/>
        <dbReference type="ChEBI" id="CHEBI:30616"/>
        <dbReference type="ChEBI" id="CHEBI:43474"/>
        <dbReference type="ChEBI" id="CHEBI:456216"/>
        <dbReference type="EC" id="3.6.4.12"/>
    </reaction>
</comment>
<comment type="cofactor">
    <cofactor evidence="2">
        <name>Mg(2+)</name>
        <dbReference type="ChEBI" id="CHEBI:18420"/>
    </cofactor>
    <text evidence="2">The endonuclease active site can probably bind other divalent cations.</text>
</comment>
<comment type="subunit">
    <text evidence="3">Homooligomer; when bound to DNA.</text>
</comment>
<comment type="subcellular location">
    <subcellularLocation>
        <location evidence="1">Host nucleus</location>
    </subcellularLocation>
</comment>
<comment type="alternative products">
    <event type="alternative splicing"/>
    <isoform>
        <id>C5IY43-1</id>
        <name>NS1</name>
        <sequence type="displayed"/>
    </isoform>
    <isoform>
        <id>C5IY43-2</id>
        <name>NS1-70</name>
        <sequence type="described" ref="VSP_059932 VSP_059933"/>
    </isoform>
</comment>
<comment type="domain">
    <text evidence="3">In the N-terminus, the endonuclease region is involved in binding to the origin of replication. In the middle, there are the ATPase and helicase activities. The C-terminus probably contains a transactivation domain.</text>
</comment>
<comment type="similarity">
    <text evidence="7">Belongs to the parvoviruses initiator protein NS1 family.</text>
</comment>
<name>NS1_HBOC4</name>
<reference key="1">
    <citation type="journal article" date="2010" name="J. Infect. Dis.">
        <title>Human bocaviruses are highly diverse, dispersed, recombination prone, and prevalent in enteric infections.</title>
        <authorList>
            <person name="Kapoor A."/>
            <person name="Simmonds P."/>
            <person name="Slikas E."/>
            <person name="Li L."/>
            <person name="Bodhidatta L."/>
            <person name="Sethabutr O."/>
            <person name="Triki H."/>
            <person name="Bahri O."/>
            <person name="Oderinde B.S."/>
            <person name="Baba M.M."/>
            <person name="Bukbuk D.N."/>
            <person name="Besser J."/>
            <person name="Bartkus J."/>
            <person name="Delwart E."/>
        </authorList>
    </citation>
    <scope>NUCLEOTIDE SEQUENCE [GENOMIC DNA] (ISOFORMS NS1 AND NS1-70)</scope>
    <source>
        <strain>HBoV4-NI-385</strain>
    </source>
</reference>
<gene>
    <name type="primary">NS1</name>
</gene>
<proteinExistence type="inferred from homology"/>
<dbReference type="EC" id="3.1.21.-" evidence="3"/>
<dbReference type="EC" id="3.6.4.12" evidence="3"/>
<dbReference type="EMBL" id="FJ973561">
    <property type="protein sequence ID" value="ACR15778.1"/>
    <property type="molecule type" value="Genomic_DNA"/>
</dbReference>
<dbReference type="EMBL" id="FJ973561">
    <property type="protein sequence ID" value="ACR15779.1"/>
    <property type="molecule type" value="Genomic_DNA"/>
</dbReference>
<dbReference type="RefSeq" id="YP_002916059.1">
    <molecule id="C5IY43-1"/>
    <property type="nucleotide sequence ID" value="NC_012729.2"/>
</dbReference>
<dbReference type="RefSeq" id="YP_002916060.1">
    <molecule id="C5IY43-2"/>
    <property type="nucleotide sequence ID" value="NC_012729.2"/>
</dbReference>
<dbReference type="SMR" id="C5IY43"/>
<dbReference type="DNASU" id="7922600"/>
<dbReference type="GeneID" id="7922600"/>
<dbReference type="KEGG" id="vg:7922600"/>
<dbReference type="KEGG" id="vg:7922604"/>
<dbReference type="OrthoDB" id="2007at10239"/>
<dbReference type="Proteomes" id="UP000106086">
    <property type="component" value="Genome"/>
</dbReference>
<dbReference type="GO" id="GO:0042025">
    <property type="term" value="C:host cell nucleus"/>
    <property type="evidence" value="ECO:0007669"/>
    <property type="project" value="UniProtKB-SubCell"/>
</dbReference>
<dbReference type="GO" id="GO:0005524">
    <property type="term" value="F:ATP binding"/>
    <property type="evidence" value="ECO:0007669"/>
    <property type="project" value="UniProtKB-KW"/>
</dbReference>
<dbReference type="GO" id="GO:0016887">
    <property type="term" value="F:ATP hydrolysis activity"/>
    <property type="evidence" value="ECO:0007669"/>
    <property type="project" value="RHEA"/>
</dbReference>
<dbReference type="GO" id="GO:0003677">
    <property type="term" value="F:DNA binding"/>
    <property type="evidence" value="ECO:0007669"/>
    <property type="project" value="UniProtKB-KW"/>
</dbReference>
<dbReference type="GO" id="GO:0004519">
    <property type="term" value="F:endonuclease activity"/>
    <property type="evidence" value="ECO:0007669"/>
    <property type="project" value="UniProtKB-KW"/>
</dbReference>
<dbReference type="GO" id="GO:0004386">
    <property type="term" value="F:helicase activity"/>
    <property type="evidence" value="ECO:0007669"/>
    <property type="project" value="UniProtKB-KW"/>
</dbReference>
<dbReference type="GO" id="GO:0046872">
    <property type="term" value="F:metal ion binding"/>
    <property type="evidence" value="ECO:0007669"/>
    <property type="project" value="UniProtKB-KW"/>
</dbReference>
<dbReference type="GO" id="GO:0006260">
    <property type="term" value="P:DNA replication"/>
    <property type="evidence" value="ECO:0007669"/>
    <property type="project" value="UniProtKB-KW"/>
</dbReference>
<dbReference type="GO" id="GO:0039693">
    <property type="term" value="P:viral DNA genome replication"/>
    <property type="evidence" value="ECO:0007669"/>
    <property type="project" value="UniProtKB-KW"/>
</dbReference>
<dbReference type="Gene3D" id="3.40.1310.20">
    <property type="match status" value="1"/>
</dbReference>
<dbReference type="Gene3D" id="3.40.50.300">
    <property type="entry name" value="P-loop containing nucleotide triphosphate hydrolases"/>
    <property type="match status" value="1"/>
</dbReference>
<dbReference type="InterPro" id="IPR054766">
    <property type="entry name" value="BoV_NS1-like_N"/>
</dbReference>
<dbReference type="InterPro" id="IPR014015">
    <property type="entry name" value="Helicase_SF3_DNA-vir"/>
</dbReference>
<dbReference type="InterPro" id="IPR027417">
    <property type="entry name" value="P-loop_NTPase"/>
</dbReference>
<dbReference type="InterPro" id="IPR001257">
    <property type="entry name" value="Parvovirus_NS1_helicase"/>
</dbReference>
<dbReference type="InterPro" id="IPR049901">
    <property type="entry name" value="PV_NS1-NUC"/>
</dbReference>
<dbReference type="Pfam" id="PF22419">
    <property type="entry name" value="HBoV_NS1-like_N"/>
    <property type="match status" value="1"/>
</dbReference>
<dbReference type="Pfam" id="PF01057">
    <property type="entry name" value="Parvo_NS1"/>
    <property type="match status" value="1"/>
</dbReference>
<dbReference type="SUPFAM" id="SSF52540">
    <property type="entry name" value="P-loop containing nucleoside triphosphate hydrolases"/>
    <property type="match status" value="1"/>
</dbReference>
<dbReference type="PROSITE" id="PS52022">
    <property type="entry name" value="PV_NS1_NUC"/>
    <property type="match status" value="1"/>
</dbReference>
<dbReference type="PROSITE" id="PS51206">
    <property type="entry name" value="SF3_HELICASE_1"/>
    <property type="match status" value="1"/>
</dbReference>